<dbReference type="EMBL" id="AABR03113655">
    <property type="status" value="NOT_ANNOTATED_CDS"/>
    <property type="molecule type" value="Genomic_DNA"/>
</dbReference>
<dbReference type="EMBL" id="AABR03113740">
    <property type="status" value="NOT_ANNOTATED_CDS"/>
    <property type="molecule type" value="Genomic_DNA"/>
</dbReference>
<dbReference type="EMBL" id="AABR03114647">
    <property type="status" value="NOT_ANNOTATED_CDS"/>
    <property type="molecule type" value="Genomic_DNA"/>
</dbReference>
<dbReference type="EMBL" id="AB161229">
    <property type="protein sequence ID" value="BAF03564.1"/>
    <property type="molecule type" value="mRNA"/>
</dbReference>
<dbReference type="RefSeq" id="NP_001070668.2">
    <property type="nucleotide sequence ID" value="NM_001077200.2"/>
</dbReference>
<dbReference type="SMR" id="Q0KL00"/>
<dbReference type="FunCoup" id="Q0KL00">
    <property type="interactions" value="410"/>
</dbReference>
<dbReference type="STRING" id="10116.ENSRNOP00000069995"/>
<dbReference type="GlyCosmos" id="Q0KL00">
    <property type="glycosylation" value="2 sites, No reported glycans"/>
</dbReference>
<dbReference type="GlyGen" id="Q0KL00">
    <property type="glycosylation" value="2 sites"/>
</dbReference>
<dbReference type="iPTMnet" id="Q0KL00"/>
<dbReference type="PhosphoSitePlus" id="Q0KL00"/>
<dbReference type="PaxDb" id="10116-ENSRNOP00000055134"/>
<dbReference type="GeneID" id="361430"/>
<dbReference type="KEGG" id="rno:361430"/>
<dbReference type="UCSC" id="RGD:1308822">
    <property type="organism name" value="rat"/>
</dbReference>
<dbReference type="AGR" id="RGD:1308822"/>
<dbReference type="CTD" id="9780"/>
<dbReference type="RGD" id="1308822">
    <property type="gene designation" value="Piezo1"/>
</dbReference>
<dbReference type="eggNOG" id="KOG1893">
    <property type="taxonomic scope" value="Eukaryota"/>
</dbReference>
<dbReference type="InParanoid" id="Q0KL00"/>
<dbReference type="PhylomeDB" id="Q0KL00"/>
<dbReference type="PRO" id="PR:Q0KL00"/>
<dbReference type="Proteomes" id="UP000002494">
    <property type="component" value="Unplaced"/>
</dbReference>
<dbReference type="GO" id="GO:0032437">
    <property type="term" value="C:cuticular plate"/>
    <property type="evidence" value="ECO:0000250"/>
    <property type="project" value="UniProtKB"/>
</dbReference>
<dbReference type="GO" id="GO:0005783">
    <property type="term" value="C:endoplasmic reticulum"/>
    <property type="evidence" value="ECO:0000250"/>
    <property type="project" value="UniProtKB"/>
</dbReference>
<dbReference type="GO" id="GO:0005789">
    <property type="term" value="C:endoplasmic reticulum membrane"/>
    <property type="evidence" value="ECO:0007669"/>
    <property type="project" value="UniProtKB-SubCell"/>
</dbReference>
<dbReference type="GO" id="GO:0033116">
    <property type="term" value="C:endoplasmic reticulum-Golgi intermediate compartment membrane"/>
    <property type="evidence" value="ECO:0007669"/>
    <property type="project" value="UniProtKB-SubCell"/>
</dbReference>
<dbReference type="GO" id="GO:0031258">
    <property type="term" value="C:lamellipodium membrane"/>
    <property type="evidence" value="ECO:0007669"/>
    <property type="project" value="UniProtKB-SubCell"/>
</dbReference>
<dbReference type="GO" id="GO:0005886">
    <property type="term" value="C:plasma membrane"/>
    <property type="evidence" value="ECO:0000250"/>
    <property type="project" value="UniProtKB"/>
</dbReference>
<dbReference type="GO" id="GO:0032420">
    <property type="term" value="C:stereocilium"/>
    <property type="evidence" value="ECO:0000250"/>
    <property type="project" value="UniProtKB"/>
</dbReference>
<dbReference type="GO" id="GO:0042802">
    <property type="term" value="F:identical protein binding"/>
    <property type="evidence" value="ECO:0000266"/>
    <property type="project" value="RGD"/>
</dbReference>
<dbReference type="GO" id="GO:0140135">
    <property type="term" value="F:mechanosensitive monoatomic cation channel activity"/>
    <property type="evidence" value="ECO:0000266"/>
    <property type="project" value="RGD"/>
</dbReference>
<dbReference type="GO" id="GO:0008381">
    <property type="term" value="F:mechanosensitive monoatomic ion channel activity"/>
    <property type="evidence" value="ECO:0000250"/>
    <property type="project" value="UniProtKB"/>
</dbReference>
<dbReference type="GO" id="GO:0005261">
    <property type="term" value="F:monoatomic cation channel activity"/>
    <property type="evidence" value="ECO:0000250"/>
    <property type="project" value="UniProtKB"/>
</dbReference>
<dbReference type="GO" id="GO:0071260">
    <property type="term" value="P:cellular response to mechanical stimulus"/>
    <property type="evidence" value="ECO:0000318"/>
    <property type="project" value="GO_Central"/>
</dbReference>
<dbReference type="GO" id="GO:0050982">
    <property type="term" value="P:detection of mechanical stimulus"/>
    <property type="evidence" value="ECO:0000266"/>
    <property type="project" value="RGD"/>
</dbReference>
<dbReference type="GO" id="GO:0006812">
    <property type="term" value="P:monoatomic cation transport"/>
    <property type="evidence" value="ECO:0000250"/>
    <property type="project" value="UniProtKB"/>
</dbReference>
<dbReference type="GO" id="GO:0033634">
    <property type="term" value="P:positive regulation of cell-cell adhesion mediated by integrin"/>
    <property type="evidence" value="ECO:0000250"/>
    <property type="project" value="UniProtKB"/>
</dbReference>
<dbReference type="GO" id="GO:0033625">
    <property type="term" value="P:positive regulation of integrin activation"/>
    <property type="evidence" value="ECO:0000250"/>
    <property type="project" value="UniProtKB"/>
</dbReference>
<dbReference type="GO" id="GO:0010831">
    <property type="term" value="P:positive regulation of myotube differentiation"/>
    <property type="evidence" value="ECO:0000250"/>
    <property type="project" value="UniProtKB"/>
</dbReference>
<dbReference type="GO" id="GO:0042391">
    <property type="term" value="P:regulation of membrane potential"/>
    <property type="evidence" value="ECO:0000266"/>
    <property type="project" value="RGD"/>
</dbReference>
<dbReference type="InterPro" id="IPR027272">
    <property type="entry name" value="Piezo"/>
</dbReference>
<dbReference type="InterPro" id="IPR031334">
    <property type="entry name" value="Piezo_cap_dom"/>
</dbReference>
<dbReference type="InterPro" id="IPR056770">
    <property type="entry name" value="Piezo_THU9_anchor"/>
</dbReference>
<dbReference type="InterPro" id="IPR056769">
    <property type="entry name" value="Piezo_TM1-24"/>
</dbReference>
<dbReference type="InterPro" id="IPR031805">
    <property type="entry name" value="Piezo_TM25-28"/>
</dbReference>
<dbReference type="InterPro" id="IPR056768">
    <property type="entry name" value="THU_Piezo"/>
</dbReference>
<dbReference type="PANTHER" id="PTHR47049:SF5">
    <property type="entry name" value="PIEZO-TYPE MECHANOSENSITIVE ION CHANNEL COMPONENT"/>
    <property type="match status" value="1"/>
</dbReference>
<dbReference type="PANTHER" id="PTHR47049">
    <property type="entry name" value="PIEZO-TYPE MECHANOSENSITIVE ION CHANNEL HOMOLOG"/>
    <property type="match status" value="1"/>
</dbReference>
<dbReference type="Pfam" id="PF12166">
    <property type="entry name" value="Piezo_cap"/>
    <property type="match status" value="1"/>
</dbReference>
<dbReference type="Pfam" id="PF24874">
    <property type="entry name" value="Piezo_THU9_anchor"/>
    <property type="match status" value="1"/>
</dbReference>
<dbReference type="Pfam" id="PF24871">
    <property type="entry name" value="Piezo_TM1-24"/>
    <property type="match status" value="1"/>
</dbReference>
<dbReference type="Pfam" id="PF15917">
    <property type="entry name" value="Piezo_TM25-28"/>
    <property type="match status" value="1"/>
</dbReference>
<dbReference type="Pfam" id="PF23188">
    <property type="entry name" value="THU_Piezo1"/>
    <property type="match status" value="1"/>
</dbReference>
<reference key="1">
    <citation type="journal article" date="2004" name="Nature">
        <title>Genome sequence of the Brown Norway rat yields insights into mammalian evolution.</title>
        <authorList>
            <person name="Gibbs R.A."/>
            <person name="Weinstock G.M."/>
            <person name="Metzker M.L."/>
            <person name="Muzny D.M."/>
            <person name="Sodergren E.J."/>
            <person name="Scherer S."/>
            <person name="Scott G."/>
            <person name="Steffen D."/>
            <person name="Worley K.C."/>
            <person name="Burch P.E."/>
            <person name="Okwuonu G."/>
            <person name="Hines S."/>
            <person name="Lewis L."/>
            <person name="Deramo C."/>
            <person name="Delgado O."/>
            <person name="Dugan-Rocha S."/>
            <person name="Miner G."/>
            <person name="Morgan M."/>
            <person name="Hawes A."/>
            <person name="Gill R."/>
            <person name="Holt R.A."/>
            <person name="Adams M.D."/>
            <person name="Amanatides P.G."/>
            <person name="Baden-Tillson H."/>
            <person name="Barnstead M."/>
            <person name="Chin S."/>
            <person name="Evans C.A."/>
            <person name="Ferriera S."/>
            <person name="Fosler C."/>
            <person name="Glodek A."/>
            <person name="Gu Z."/>
            <person name="Jennings D."/>
            <person name="Kraft C.L."/>
            <person name="Nguyen T."/>
            <person name="Pfannkoch C.M."/>
            <person name="Sitter C."/>
            <person name="Sutton G.G."/>
            <person name="Venter J.C."/>
            <person name="Woodage T."/>
            <person name="Smith D."/>
            <person name="Lee H.-M."/>
            <person name="Gustafson E."/>
            <person name="Cahill P."/>
            <person name="Kana A."/>
            <person name="Doucette-Stamm L."/>
            <person name="Weinstock K."/>
            <person name="Fechtel K."/>
            <person name="Weiss R.B."/>
            <person name="Dunn D.M."/>
            <person name="Green E.D."/>
            <person name="Blakesley R.W."/>
            <person name="Bouffard G.G."/>
            <person name="De Jong P.J."/>
            <person name="Osoegawa K."/>
            <person name="Zhu B."/>
            <person name="Marra M."/>
            <person name="Schein J."/>
            <person name="Bosdet I."/>
            <person name="Fjell C."/>
            <person name="Jones S."/>
            <person name="Krzywinski M."/>
            <person name="Mathewson C."/>
            <person name="Siddiqui A."/>
            <person name="Wye N."/>
            <person name="McPherson J."/>
            <person name="Zhao S."/>
            <person name="Fraser C.M."/>
            <person name="Shetty J."/>
            <person name="Shatsman S."/>
            <person name="Geer K."/>
            <person name="Chen Y."/>
            <person name="Abramzon S."/>
            <person name="Nierman W.C."/>
            <person name="Havlak P.H."/>
            <person name="Chen R."/>
            <person name="Durbin K.J."/>
            <person name="Egan A."/>
            <person name="Ren Y."/>
            <person name="Song X.-Z."/>
            <person name="Li B."/>
            <person name="Liu Y."/>
            <person name="Qin X."/>
            <person name="Cawley S."/>
            <person name="Cooney A.J."/>
            <person name="D'Souza L.M."/>
            <person name="Martin K."/>
            <person name="Wu J.Q."/>
            <person name="Gonzalez-Garay M.L."/>
            <person name="Jackson A.R."/>
            <person name="Kalafus K.J."/>
            <person name="McLeod M.P."/>
            <person name="Milosavljevic A."/>
            <person name="Virk D."/>
            <person name="Volkov A."/>
            <person name="Wheeler D.A."/>
            <person name="Zhang Z."/>
            <person name="Bailey J.A."/>
            <person name="Eichler E.E."/>
            <person name="Tuzun E."/>
            <person name="Birney E."/>
            <person name="Mongin E."/>
            <person name="Ureta-Vidal A."/>
            <person name="Woodwark C."/>
            <person name="Zdobnov E."/>
            <person name="Bork P."/>
            <person name="Suyama M."/>
            <person name="Torrents D."/>
            <person name="Alexandersson M."/>
            <person name="Trask B.J."/>
            <person name="Young J.M."/>
            <person name="Huang H."/>
            <person name="Wang H."/>
            <person name="Xing H."/>
            <person name="Daniels S."/>
            <person name="Gietzen D."/>
            <person name="Schmidt J."/>
            <person name="Stevens K."/>
            <person name="Vitt U."/>
            <person name="Wingrove J."/>
            <person name="Camara F."/>
            <person name="Mar Alba M."/>
            <person name="Abril J.F."/>
            <person name="Guigo R."/>
            <person name="Smit A."/>
            <person name="Dubchak I."/>
            <person name="Rubin E.M."/>
            <person name="Couronne O."/>
            <person name="Poliakov A."/>
            <person name="Huebner N."/>
            <person name="Ganten D."/>
            <person name="Goesele C."/>
            <person name="Hummel O."/>
            <person name="Kreitler T."/>
            <person name="Lee Y.-A."/>
            <person name="Monti J."/>
            <person name="Schulz H."/>
            <person name="Zimdahl H."/>
            <person name="Himmelbauer H."/>
            <person name="Lehrach H."/>
            <person name="Jacob H.J."/>
            <person name="Bromberg S."/>
            <person name="Gullings-Handley J."/>
            <person name="Jensen-Seaman M.I."/>
            <person name="Kwitek A.E."/>
            <person name="Lazar J."/>
            <person name="Pasko D."/>
            <person name="Tonellato P.J."/>
            <person name="Twigger S."/>
            <person name="Ponting C.P."/>
            <person name="Duarte J.M."/>
            <person name="Rice S."/>
            <person name="Goodstadt L."/>
            <person name="Beatson S.A."/>
            <person name="Emes R.D."/>
            <person name="Winter E.E."/>
            <person name="Webber C."/>
            <person name="Brandt P."/>
            <person name="Nyakatura G."/>
            <person name="Adetobi M."/>
            <person name="Chiaromonte F."/>
            <person name="Elnitski L."/>
            <person name="Eswara P."/>
            <person name="Hardison R.C."/>
            <person name="Hou M."/>
            <person name="Kolbe D."/>
            <person name="Makova K."/>
            <person name="Miller W."/>
            <person name="Nekrutenko A."/>
            <person name="Riemer C."/>
            <person name="Schwartz S."/>
            <person name="Taylor J."/>
            <person name="Yang S."/>
            <person name="Zhang Y."/>
            <person name="Lindpaintner K."/>
            <person name="Andrews T.D."/>
            <person name="Caccamo M."/>
            <person name="Clamp M."/>
            <person name="Clarke L."/>
            <person name="Curwen V."/>
            <person name="Durbin R.M."/>
            <person name="Eyras E."/>
            <person name="Searle S.M."/>
            <person name="Cooper G.M."/>
            <person name="Batzoglou S."/>
            <person name="Brudno M."/>
            <person name="Sidow A."/>
            <person name="Stone E.A."/>
            <person name="Payseur B.A."/>
            <person name="Bourque G."/>
            <person name="Lopez-Otin C."/>
            <person name="Puente X.S."/>
            <person name="Chakrabarti K."/>
            <person name="Chatterji S."/>
            <person name="Dewey C."/>
            <person name="Pachter L."/>
            <person name="Bray N."/>
            <person name="Yap V.B."/>
            <person name="Caspi A."/>
            <person name="Tesler G."/>
            <person name="Pevzner P.A."/>
            <person name="Haussler D."/>
            <person name="Roskin K.M."/>
            <person name="Baertsch R."/>
            <person name="Clawson H."/>
            <person name="Furey T.S."/>
            <person name="Hinrichs A.S."/>
            <person name="Karolchik D."/>
            <person name="Kent W.J."/>
            <person name="Rosenbloom K.R."/>
            <person name="Trumbower H."/>
            <person name="Weirauch M."/>
            <person name="Cooper D.N."/>
            <person name="Stenson P.D."/>
            <person name="Ma B."/>
            <person name="Brent M."/>
            <person name="Arumugam M."/>
            <person name="Shteynberg D."/>
            <person name="Copley R.R."/>
            <person name="Taylor M.S."/>
            <person name="Riethman H."/>
            <person name="Mudunuri U."/>
            <person name="Peterson J."/>
            <person name="Guyer M."/>
            <person name="Felsenfeld A."/>
            <person name="Old S."/>
            <person name="Mockrin S."/>
            <person name="Collins F.S."/>
        </authorList>
    </citation>
    <scope>NUCLEOTIDE SEQUENCE [LARGE SCALE GENOMIC DNA]</scope>
    <source>
        <strain>Brown Norway</strain>
    </source>
</reference>
<reference key="2">
    <citation type="journal article" date="2006" name="Brain Res.">
        <title>A novel membrane protein, encoded by the gene covering KIAA0233, is transcriptionally induced in senile plaque-associated astrocytes.</title>
        <authorList>
            <person name="Satoh K."/>
            <person name="Hata M."/>
            <person name="Takahara S."/>
            <person name="Tsuzaki H."/>
            <person name="Yokota H."/>
            <person name="Akatsu H."/>
            <person name="Yamamoto T."/>
            <person name="Kosaka K."/>
            <person name="Yamada T."/>
        </authorList>
    </citation>
    <scope>NUCLEOTIDE SEQUENCE [MRNA] OF 430-2535</scope>
    <scope>SUBCELLULAR LOCATION</scope>
    <scope>TISSUE SPECIFICITY</scope>
    <scope>INDUCTION</scope>
    <source>
        <strain>Wistar</strain>
        <tissue>Astrocyte</tissue>
    </source>
</reference>
<reference key="3">
    <citation type="journal article" date="2012" name="Nat. Commun.">
        <title>Quantitative maps of protein phosphorylation sites across 14 different rat organs and tissues.</title>
        <authorList>
            <person name="Lundby A."/>
            <person name="Secher A."/>
            <person name="Lage K."/>
            <person name="Nordsborg N.B."/>
            <person name="Dmytriyev A."/>
            <person name="Lundby C."/>
            <person name="Olsen J.V."/>
        </authorList>
    </citation>
    <scope>PHOSPHORYLATION [LARGE SCALE ANALYSIS] AT SER-749; SER-1372 AND SER-1633</scope>
    <scope>IDENTIFICATION BY MASS SPECTROMETRY [LARGE SCALE ANALYSIS]</scope>
</reference>
<proteinExistence type="evidence at protein level"/>
<organism>
    <name type="scientific">Rattus norvegicus</name>
    <name type="common">Rat</name>
    <dbReference type="NCBI Taxonomy" id="10116"/>
    <lineage>
        <taxon>Eukaryota</taxon>
        <taxon>Metazoa</taxon>
        <taxon>Chordata</taxon>
        <taxon>Craniata</taxon>
        <taxon>Vertebrata</taxon>
        <taxon>Euteleostomi</taxon>
        <taxon>Mammalia</taxon>
        <taxon>Eutheria</taxon>
        <taxon>Euarchontoglires</taxon>
        <taxon>Glires</taxon>
        <taxon>Rodentia</taxon>
        <taxon>Myomorpha</taxon>
        <taxon>Muroidea</taxon>
        <taxon>Muridae</taxon>
        <taxon>Murinae</taxon>
        <taxon>Rattus</taxon>
    </lineage>
</organism>
<accession>Q0KL00</accession>
<comment type="function">
    <text evidence="1 2">Pore-forming subunit of the mechanosensitive non-specific cation Piezo channel required for rapidly adapting mechanically activated (MA) currents and has a key role in sensing touch and tactile pain (By similarity). Piezo channels are homotrimeric three-blade propeller-shaped structures that utilize a cap-motion and plug-and-latch mechanism to gate their ion-conducting pathways (By similarity). Generates currents characterized by a linear current-voltage relationship that are sensitive to ruthenium red and gadolinium (By similarity). Conductance to monovalent alkali ions is highest for K(+), intermediate for Na(+) and lowest for Li(+) (By similarity). Divalent ions except for Mn(2+) permeate the channel but more slowly than the monovalent ions and they also reduce K(+) currents (By similarity). Plays a key role in epithelial cell adhesion by maintaining integrin activation through R-Ras recruitment to the ER, most probably in its activated state, and subsequent stimulation of calpain signaling (By similarity). In inner ear hair cells, PIEZO1/2 subunits may constitute part of the mechanotransducer (MET) non-selective cation channel complex where they may act as pore-forming ion-conducting component in the complex (By similarity). In the kidney, may contribute to the detection of intraluminal pressure changes and to urine flow sensing (By similarity). Acts as a shear-stress sensor that promotes endothelial cell organization and alignment in the direction of blood flow through calpain activation (By similarity). Plays a key role in blood vessel formation and vascular structure in both development and adult physiology (By similarity). Acts as a sensor of phosphatidylserine (PS) flipping at the plasma membrane and governs morphogenesis of muscle cells (By similarity). In myoblasts, flippase-mediated PS enrichment at the inner leaflet of plasma membrane triggers channel activation and Ca(2+) influx followed by Rho GTPases signal transduction, leading to assembly of cortical actomyosin fibers and myotube formation (By similarity).</text>
</comment>
<comment type="catalytic activity">
    <reaction evidence="2">
        <text>K(+)(in) = K(+)(out)</text>
        <dbReference type="Rhea" id="RHEA:29463"/>
        <dbReference type="ChEBI" id="CHEBI:29103"/>
    </reaction>
</comment>
<comment type="catalytic activity">
    <reaction evidence="2">
        <text>Na(+)(in) = Na(+)(out)</text>
        <dbReference type="Rhea" id="RHEA:34963"/>
        <dbReference type="ChEBI" id="CHEBI:29101"/>
    </reaction>
</comment>
<comment type="catalytic activity">
    <reaction evidence="2">
        <text>Ca(2+)(in) = Ca(2+)(out)</text>
        <dbReference type="Rhea" id="RHEA:29671"/>
        <dbReference type="ChEBI" id="CHEBI:29108"/>
    </reaction>
</comment>
<comment type="catalytic activity">
    <reaction evidence="2">
        <text>Mg(2+)(in) = Mg(2+)(out)</text>
        <dbReference type="Rhea" id="RHEA:29827"/>
        <dbReference type="ChEBI" id="CHEBI:18420"/>
    </reaction>
</comment>
<comment type="activity regulation">
    <text evidence="1 2">Regulated by auxillary subunits MDFIC and MDFI (By similarity). Down-regulated by phosphatidylserines exposed on the cell surface (By similarity). Divalent ions decrease the single-channel permeability of K(+).</text>
</comment>
<comment type="subunit">
    <text evidence="1">Homotrimer; the homotrimer forms a propeller-shaped Piezo channel with a cation-ion conducting pore (By similarity). Heterotrimeric interaction may occur between PIEZO1 and PIEZO2 (By similarity). Interacts with PKD2 (By similarity). Interacts with STOM13 (By similarity). Interacts with TMC1, TMC2, PCDH15 and CIB2; the interaction may be part of the MET complex (By similarity). Interacts with MDFIC (via C-terminus); the interaction prolongs Piezo channel inactivation (By similarity). Interacts with MDFI (via C-terminus); the interaction prolongs Piezo channel inactivation (By similarity).</text>
</comment>
<comment type="subcellular location">
    <subcellularLocation>
        <location evidence="5">Endoplasmic reticulum membrane</location>
        <topology evidence="5">Multi-pass membrane protein</topology>
    </subcellularLocation>
    <subcellularLocation>
        <location evidence="5">Endoplasmic reticulum-Golgi intermediate compartment membrane</location>
    </subcellularLocation>
    <subcellularLocation>
        <location evidence="5">Cell membrane</location>
        <topology evidence="5">Multi-pass membrane protein</topology>
    </subcellularLocation>
    <subcellularLocation>
        <location evidence="2">Cell projection</location>
        <location evidence="2">Lamellipodium membrane</location>
    </subcellularLocation>
    <text evidence="1 2">In erythrocytes, located in the plasma membrane. Accumulates at the leading apical lamellipodia of endothelial cells in response to shear stress (By similarity). Colocalizes with F-actin and MYH9 at the actomyosin cortex in myoblasts.</text>
</comment>
<comment type="tissue specificity">
    <text evidence="5">Moderate expression in lung and kidney. Very weak expression in heart, spleen and liver.</text>
</comment>
<comment type="induction">
    <text evidence="5">By APP.</text>
</comment>
<comment type="miscellaneous">
    <text>Piezo comes from the Greek 'piesi' meaning pressure.</text>
</comment>
<comment type="similarity">
    <text evidence="6">Belongs to the PIEZO (TC 1.A.75) family.</text>
</comment>
<gene>
    <name type="primary">Piezo1</name>
    <name type="synonym">Fam38a</name>
</gene>
<evidence type="ECO:0000250" key="1">
    <source>
        <dbReference type="UniProtKB" id="E2JF22"/>
    </source>
</evidence>
<evidence type="ECO:0000250" key="2">
    <source>
        <dbReference type="UniProtKB" id="Q92508"/>
    </source>
</evidence>
<evidence type="ECO:0000255" key="3"/>
<evidence type="ECO:0000256" key="4">
    <source>
        <dbReference type="SAM" id="MobiDB-lite"/>
    </source>
</evidence>
<evidence type="ECO:0000269" key="5">
    <source>
    </source>
</evidence>
<evidence type="ECO:0000305" key="6"/>
<evidence type="ECO:0007744" key="7">
    <source>
    </source>
</evidence>
<keyword id="KW-1003">Cell membrane</keyword>
<keyword id="KW-0966">Cell projection</keyword>
<keyword id="KW-0175">Coiled coil</keyword>
<keyword id="KW-1015">Disulfide bond</keyword>
<keyword id="KW-0256">Endoplasmic reticulum</keyword>
<keyword id="KW-0325">Glycoprotein</keyword>
<keyword id="KW-0407">Ion channel</keyword>
<keyword id="KW-0406">Ion transport</keyword>
<keyword id="KW-0472">Membrane</keyword>
<keyword id="KW-0597">Phosphoprotein</keyword>
<keyword id="KW-1185">Reference proteome</keyword>
<keyword id="KW-0812">Transmembrane</keyword>
<keyword id="KW-1133">Transmembrane helix</keyword>
<keyword id="KW-0813">Transport</keyword>
<name>PIEZ1_RAT</name>
<feature type="chain" id="PRO_0000305782" description="Piezo-type mechanosensitive ion channel component 1">
    <location>
        <begin position="1"/>
        <end position="2535"/>
    </location>
</feature>
<feature type="transmembrane region" description="Helical; Name=1">
    <location>
        <begin position="13"/>
        <end position="25"/>
    </location>
</feature>
<feature type="transmembrane region" description="Helical; Name=2">
    <location>
        <begin position="29"/>
        <end position="44"/>
    </location>
</feature>
<feature type="transmembrane region" description="Helical; Name=3">
    <location>
        <begin position="59"/>
        <end position="81"/>
    </location>
</feature>
<feature type="transmembrane region" description="Helical; Name=4">
    <location>
        <begin position="122"/>
        <end position="138"/>
    </location>
</feature>
<feature type="transmembrane region" description="Helical; Name=5">
    <location>
        <begin position="193"/>
        <end position="212"/>
    </location>
</feature>
<feature type="transmembrane region" description="Helical; Name=6">
    <location>
        <begin position="215"/>
        <end position="234"/>
    </location>
</feature>
<feature type="transmembrane region" description="Helical; Name=7">
    <location>
        <begin position="246"/>
        <end position="266"/>
    </location>
</feature>
<feature type="transmembrane region" description="Helical; Name=8">
    <location>
        <begin position="308"/>
        <end position="328"/>
    </location>
</feature>
<feature type="transmembrane region" description="Helical; Name=9">
    <location>
        <begin position="416"/>
        <end position="436"/>
    </location>
</feature>
<feature type="transmembrane region" description="Helical; Name=10">
    <location>
        <begin position="439"/>
        <end position="454"/>
    </location>
</feature>
<feature type="transmembrane region" description="Helical; Name=11">
    <location>
        <begin position="460"/>
        <end position="482"/>
    </location>
</feature>
<feature type="transmembrane region" description="Helical; Name=12">
    <location>
        <begin position="510"/>
        <end position="527"/>
    </location>
</feature>
<feature type="transmembrane region" description="Helical; Name=13">
    <location>
        <begin position="572"/>
        <end position="592"/>
    </location>
</feature>
<feature type="transmembrane region" description="Helical; Name=14">
    <location>
        <begin position="594"/>
        <end position="614"/>
    </location>
</feature>
<feature type="transmembrane region" description="Helical; Name=15">
    <location>
        <begin position="625"/>
        <end position="646"/>
    </location>
</feature>
<feature type="transmembrane region" description="Helical; Name=16">
    <location>
        <begin position="677"/>
        <end position="693"/>
    </location>
</feature>
<feature type="transmembrane region" description="Helical; Name=17" evidence="1">
    <location>
        <begin position="803"/>
        <end position="814"/>
    </location>
</feature>
<feature type="transmembrane region" description="Helical; Name=18" evidence="1">
    <location>
        <begin position="818"/>
        <end position="831"/>
    </location>
</feature>
<feature type="transmembrane region" description="Helical; Name=19" evidence="1">
    <location>
        <begin position="846"/>
        <end position="860"/>
    </location>
</feature>
<feature type="transmembrane region" description="Helical; Name=20" evidence="1">
    <location>
        <begin position="913"/>
        <end position="940"/>
    </location>
</feature>
<feature type="transmembrane region" description="Helical; Name=21" evidence="1">
    <location>
        <begin position="981"/>
        <end position="996"/>
    </location>
</feature>
<feature type="transmembrane region" description="Helical; Name=22" evidence="1">
    <location>
        <begin position="999"/>
        <end position="1014"/>
    </location>
</feature>
<feature type="transmembrane region" description="Helical; Name=23" evidence="1">
    <location>
        <begin position="1028"/>
        <end position="1043"/>
    </location>
</feature>
<feature type="transmembrane region" description="Helical; Name=24" evidence="1">
    <location>
        <begin position="1083"/>
        <end position="1104"/>
    </location>
</feature>
<feature type="transmembrane region" description="Helical; Name=25" evidence="1">
    <location>
        <begin position="1140"/>
        <end position="1166"/>
    </location>
</feature>
<feature type="transmembrane region" description="Helical; Name=26" evidence="1">
    <location>
        <begin position="1172"/>
        <end position="1190"/>
    </location>
</feature>
<feature type="transmembrane region" description="Helical; Name=27" evidence="1">
    <location>
        <begin position="1204"/>
        <end position="1222"/>
    </location>
</feature>
<feature type="transmembrane region" description="Helical; Name=28" evidence="1">
    <location>
        <begin position="1272"/>
        <end position="1288"/>
    </location>
</feature>
<feature type="transmembrane region" description="Helical; Name=29" evidence="1">
    <location>
        <begin position="1644"/>
        <end position="1687"/>
    </location>
</feature>
<feature type="transmembrane region" description="Helical; Name=30" evidence="1">
    <location>
        <begin position="1692"/>
        <end position="1707"/>
    </location>
</feature>
<feature type="transmembrane region" description="Helical; Name=31" evidence="1">
    <location>
        <begin position="1716"/>
        <end position="1734"/>
    </location>
</feature>
<feature type="transmembrane region" description="Helical; Name=32" evidence="1">
    <location>
        <begin position="1767"/>
        <end position="1788"/>
    </location>
</feature>
<feature type="transmembrane region" description="Helical; Name=33" evidence="1">
    <location>
        <begin position="1965"/>
        <end position="1984"/>
    </location>
</feature>
<feature type="transmembrane region" description="Helical; Name=34" evidence="1">
    <location>
        <begin position="2005"/>
        <end position="2021"/>
    </location>
</feature>
<feature type="transmembrane region" description="Helical; Name=35" evidence="1">
    <location>
        <begin position="2036"/>
        <end position="2056"/>
    </location>
</feature>
<feature type="transmembrane region" description="Helical; Name=36" evidence="1">
    <location>
        <begin position="2065"/>
        <end position="2080"/>
    </location>
</feature>
<feature type="transmembrane region" description="Helical; Name=37" evidence="1">
    <location>
        <begin position="2181"/>
        <end position="2201"/>
    </location>
</feature>
<feature type="transmembrane region" description="Helical; Name=38" evidence="1">
    <location>
        <begin position="2446"/>
        <end position="2466"/>
    </location>
</feature>
<feature type="region of interest" description="Disordered" evidence="4">
    <location>
        <begin position="346"/>
        <end position="377"/>
    </location>
</feature>
<feature type="region of interest" description="Disordered" evidence="4">
    <location>
        <begin position="1345"/>
        <end position="1383"/>
    </location>
</feature>
<feature type="region of interest" description="Disordered" evidence="4">
    <location>
        <begin position="1556"/>
        <end position="1597"/>
    </location>
</feature>
<feature type="region of interest" description="Disordered" evidence="4">
    <location>
        <begin position="1801"/>
        <end position="1911"/>
    </location>
</feature>
<feature type="coiled-coil region" evidence="3">
    <location>
        <begin position="1325"/>
        <end position="1356"/>
    </location>
</feature>
<feature type="compositionally biased region" description="Acidic residues" evidence="4">
    <location>
        <begin position="346"/>
        <end position="357"/>
    </location>
</feature>
<feature type="compositionally biased region" description="Low complexity" evidence="4">
    <location>
        <begin position="358"/>
        <end position="376"/>
    </location>
</feature>
<feature type="compositionally biased region" description="Polar residues" evidence="4">
    <location>
        <begin position="1352"/>
        <end position="1365"/>
    </location>
</feature>
<feature type="compositionally biased region" description="Polar residues" evidence="4">
    <location>
        <begin position="1579"/>
        <end position="1597"/>
    </location>
</feature>
<feature type="compositionally biased region" description="Basic and acidic residues" evidence="4">
    <location>
        <begin position="1801"/>
        <end position="1811"/>
    </location>
</feature>
<feature type="compositionally biased region" description="Basic and acidic residues" evidence="4">
    <location>
        <begin position="1842"/>
        <end position="1867"/>
    </location>
</feature>
<feature type="compositionally biased region" description="Basic residues" evidence="4">
    <location>
        <begin position="1868"/>
        <end position="1881"/>
    </location>
</feature>
<feature type="modified residue" description="Phosphoserine" evidence="7">
    <location>
        <position position="749"/>
    </location>
</feature>
<feature type="modified residue" description="Phosphoserine" evidence="7">
    <location>
        <position position="1372"/>
    </location>
</feature>
<feature type="modified residue" description="Phosphoserine" evidence="2">
    <location>
        <position position="1377"/>
    </location>
</feature>
<feature type="modified residue" description="Phosphoserine" evidence="2">
    <location>
        <position position="1614"/>
    </location>
</feature>
<feature type="modified residue" description="Phosphoserine" evidence="1">
    <location>
        <position position="1618"/>
    </location>
</feature>
<feature type="modified residue" description="Phosphoserine" evidence="7">
    <location>
        <position position="1633"/>
    </location>
</feature>
<feature type="glycosylation site" description="N-linked (GlcNAc...) asparagine" evidence="3">
    <location>
        <position position="100"/>
    </location>
</feature>
<feature type="glycosylation site" description="N-linked (GlcNAc...) asparagine" evidence="3">
    <location>
        <position position="380"/>
    </location>
</feature>
<feature type="disulfide bond" evidence="1">
    <location>
        <begin position="2425"/>
        <end position="2429"/>
    </location>
</feature>
<protein>
    <recommendedName>
        <fullName>Piezo-type mechanosensitive ion channel component 1</fullName>
    </recommendedName>
    <alternativeName>
        <fullName>Membrane protein induced by beta-amyloid treatment</fullName>
        <shortName>Mib</shortName>
    </alternativeName>
    <alternativeName>
        <fullName>Protein FAM38A</fullName>
    </alternativeName>
</protein>
<sequence>MEPHVLGAGLYWLLLPCTLLAASLLRFNALSLVYLLFLLLLPWLPGPSRHSIPGHTGRLLRALLCLSLLFLVAHVAFQICLHTMPRLNQLLGQNCNLWANVSQHIGVTRLDLKDIFNTTRLVAPDLGVLVASSLCLGLCGRLTRKARQSQRTQELEEDDIDAAPAAGLQGAPTLATKRRLWLAPRFRITAHWLLVTSGRMLVIVLLALAGIAHPSAFSSVYLMVFLAICTWWSCHFPLSSLGFNTLCVMVSCFGAGHLVCLYCYQTPFVQSVLLPGSLWARLFGLKNFVDIPNCSSPNVLVLNTKHAWPIYVSPGILLLLYYTATSLLKLRKGRFSELRKEIPREDEEHELELDQLEPEPQARGTTQGATPTTTGPDIDNCTVHVLTSQSPVRQRPVRPRLAELKEMSPLHGLGHLILDQSYVCALIAMMVWSIMYHSWLTFVLLLWACLIWTVRSRHQLAMLCSPCILLYGLTLCCLRYVWAMELPELPTTLGPVSLHQLGLEHTRYPCLDLGAMLLYLLTFWLLLRQFVKEKLLKKRKAPSTLLEVTVSDTEPTQTQTLLRSLGELVTGIYVKYWIYVCAGMFIVVSFAGRLVVYKIVYMFLFLLCLTLFQVYYTLWRKLLRVFWWLVVAYTMLVLIAVYTFQFQDFPTYWRNLTGFTDEQLGDLGLEQFSVSELFSSILIPGFFLLACILQLHYFHRPFMQLTDLEHVPPPGTRRLRWAHRQDTVSEAPLLQHQEEEEVFRDDGQSMDGPHQTTQVPEGTASKWGLVADRLLDLASSFSAVLTRIQVFVRCLLELHVFKLVALYTVWVALKEVSVMNLLLVVLWAFALPYPRFRPMASCLSTVWTCIIIVCKMLYQLKIVNPHEYSSNCTEPFPNNTNLQPLEISQSLLYRGPVDPANWFGVRKGYPNLGYIQNHLQILLLLVFEAVVYRRQEHYRRQHQQAPLPAQALCADGTRQRLDQDLLSCLKYFINFFFYKFGLEICFLMAVNVIGQRMNFMVILHGCWLVAILTRRRREAIARLWPNYCLFLTLFLLYQYLLCLGMPPALCIDYPWRWSQAIPMNSALIKWLYLPDFFRAPNSTNLISDFLLLLCASQQWQVFSAEQTEEWQRMAGVNTDHLEPLRGEPNPIPNFIHCRSYLDMLKVAVFRYLFWLVLVVVFVTGATRISIFGLGYLLACFYLLLFGTTLLQKDTRAQLVLWDCLILYNVTVIISKNMLSLLSCVFVEQMQSNFCWVIQLFSLVCTVKGYYDPKEMKTRDRDCLLPVEEAGIIWDSICFFFLLLQRRVFLSHYFLHVSADLKATALQASRGFALYNAANIKNINFHRQTEERSLAQLKRQMKRIRAKQEKYRQSQASRGQLQSTDPQEPGPDSPGGSSPPRTQWWRPWQDHATVIHSGDYFLFESDSEEEEEALPEDPRPAAQSAFQMAYQAWVTNAQTVLRQRREQARRDRAEQLASGGDLSPEVELVDVPENEMAGHSHVMQRVLSTMQFLWVLGQATVDGLTRWLRTFTKDHRTMSDVLCAERYLLTQELLRGGEVHRGVLDQLYVSEDEIALSGPVENRDGPSTASSGLGAEEPLSSMTDDTGSPLSTGYNTRSGSEEIITDTGGLQAGTSLHGSQELLANARTRMRTASELLLDRRLRIPELEEAEQFEAQQGRTLRLLRAMYQCVAAHSELLCYFIIILNHMVTASAASLVLPVLVFLWAMLTIPRPSKRFWMTAIVFTEVMVVTKYLFQFGFFPWNSYIVLRRYENKPYFPPRILGLEKTDSYIKYDLVQLMALFFHRSQLLCYGLWDHEEDGVPKDHCRSSEKDQEAEEESEAKLESQPETGTGHPEEPVLTGTPKDHIQGKGSVRSKDEIQDPPEDLKPQHRRHISIRFRRRKETQGPKGAAVVEAEHEEGEEGREAAGRKRLRRPREGLKIREKMKAAGRRLQSFCLSLAQSFYQPLRRFFHDILHTKYRAATDVYALMFLADIVDIVVIIFGFWAFGKHSAATDIASSLSDDQVPQAFLFMLLVQFGTMVIDRALYLRKTVLGNLAFQVVLVVAIHLWMFFILPAVTERMFRQNAVAQLWYFVKCIYFALSAYQIRCGYPTRILGNFLTKKYNHLNLFLFQGFRLVPFLVELRAVMDWVWTDTTLSLSNWMCVEDIYANIFIIKCSRETEKKYPQPKGQKKKKIVKYGMGGLIILFLIAIIWFPLLFMSLIRSVVGVVNQPIDVTVTLKLGGYEPLFTMSAQQPSIVPFTPEDYEELSQQFDPYPLAMQFISQYSPEDIVTAQIEGSSGALWRISPPSRAQMKHELYNGTADITLRFTWNFQRDLAKGGSVEYTNEKHTLELAPNSTARRQLAQLLEGRPDQSVVIPHLFPKYIRAPNGPEANPVKQLQPDEEEDYLGVRIQLRREQVGTGTSGEQAGTKASDFLEWWVIELQDCQAECNLLPMVIFSDKVSPPSLGFLAGYGIVGLYVSIVLVVGKFVRGFFSDISHSIMFEELPCVDRILKLCQDIFLVRETRELELEEELYAKLIFLYRSPETMIKWTREKE</sequence>